<dbReference type="EC" id="7.1.2.2" evidence="1"/>
<dbReference type="EMBL" id="AJ749949">
    <property type="protein sequence ID" value="CAG44695.1"/>
    <property type="molecule type" value="Genomic_DNA"/>
</dbReference>
<dbReference type="RefSeq" id="WP_003019762.1">
    <property type="nucleotide sequence ID" value="NC_006570.2"/>
</dbReference>
<dbReference type="RefSeq" id="YP_169137.1">
    <property type="nucleotide sequence ID" value="NC_006570.2"/>
</dbReference>
<dbReference type="SMR" id="Q5NIK5"/>
<dbReference type="STRING" id="177416.FTT_0062"/>
<dbReference type="DNASU" id="3190736"/>
<dbReference type="EnsemblBacteria" id="CAG44695">
    <property type="protein sequence ID" value="CAG44695"/>
    <property type="gene ID" value="FTT_0062"/>
</dbReference>
<dbReference type="KEGG" id="ftu:FTT_0062"/>
<dbReference type="eggNOG" id="COG0056">
    <property type="taxonomic scope" value="Bacteria"/>
</dbReference>
<dbReference type="OrthoDB" id="9803053at2"/>
<dbReference type="Proteomes" id="UP000001174">
    <property type="component" value="Chromosome"/>
</dbReference>
<dbReference type="GO" id="GO:0005886">
    <property type="term" value="C:plasma membrane"/>
    <property type="evidence" value="ECO:0007669"/>
    <property type="project" value="UniProtKB-SubCell"/>
</dbReference>
<dbReference type="GO" id="GO:0045259">
    <property type="term" value="C:proton-transporting ATP synthase complex"/>
    <property type="evidence" value="ECO:0007669"/>
    <property type="project" value="UniProtKB-KW"/>
</dbReference>
<dbReference type="GO" id="GO:0043531">
    <property type="term" value="F:ADP binding"/>
    <property type="evidence" value="ECO:0007669"/>
    <property type="project" value="TreeGrafter"/>
</dbReference>
<dbReference type="GO" id="GO:0005524">
    <property type="term" value="F:ATP binding"/>
    <property type="evidence" value="ECO:0007669"/>
    <property type="project" value="UniProtKB-UniRule"/>
</dbReference>
<dbReference type="GO" id="GO:0046933">
    <property type="term" value="F:proton-transporting ATP synthase activity, rotational mechanism"/>
    <property type="evidence" value="ECO:0007669"/>
    <property type="project" value="UniProtKB-UniRule"/>
</dbReference>
<dbReference type="CDD" id="cd18113">
    <property type="entry name" value="ATP-synt_F1_alpha_C"/>
    <property type="match status" value="1"/>
</dbReference>
<dbReference type="CDD" id="cd18116">
    <property type="entry name" value="ATP-synt_F1_alpha_N"/>
    <property type="match status" value="1"/>
</dbReference>
<dbReference type="CDD" id="cd01132">
    <property type="entry name" value="F1-ATPase_alpha_CD"/>
    <property type="match status" value="1"/>
</dbReference>
<dbReference type="FunFam" id="1.20.150.20:FF:000001">
    <property type="entry name" value="ATP synthase subunit alpha"/>
    <property type="match status" value="1"/>
</dbReference>
<dbReference type="FunFam" id="2.40.30.20:FF:000001">
    <property type="entry name" value="ATP synthase subunit alpha"/>
    <property type="match status" value="1"/>
</dbReference>
<dbReference type="FunFam" id="3.40.50.300:FF:000002">
    <property type="entry name" value="ATP synthase subunit alpha"/>
    <property type="match status" value="1"/>
</dbReference>
<dbReference type="Gene3D" id="2.40.30.20">
    <property type="match status" value="1"/>
</dbReference>
<dbReference type="Gene3D" id="1.20.150.20">
    <property type="entry name" value="ATP synthase alpha/beta chain, C-terminal domain"/>
    <property type="match status" value="1"/>
</dbReference>
<dbReference type="Gene3D" id="3.40.50.300">
    <property type="entry name" value="P-loop containing nucleotide triphosphate hydrolases"/>
    <property type="match status" value="1"/>
</dbReference>
<dbReference type="HAMAP" id="MF_01346">
    <property type="entry name" value="ATP_synth_alpha_bact"/>
    <property type="match status" value="1"/>
</dbReference>
<dbReference type="InterPro" id="IPR023366">
    <property type="entry name" value="ATP_synth_asu-like_sf"/>
</dbReference>
<dbReference type="InterPro" id="IPR000793">
    <property type="entry name" value="ATP_synth_asu_C"/>
</dbReference>
<dbReference type="InterPro" id="IPR038376">
    <property type="entry name" value="ATP_synth_asu_C_sf"/>
</dbReference>
<dbReference type="InterPro" id="IPR033732">
    <property type="entry name" value="ATP_synth_F1_a_nt-bd_dom"/>
</dbReference>
<dbReference type="InterPro" id="IPR005294">
    <property type="entry name" value="ATP_synth_F1_asu"/>
</dbReference>
<dbReference type="InterPro" id="IPR020003">
    <property type="entry name" value="ATPase_a/bsu_AS"/>
</dbReference>
<dbReference type="InterPro" id="IPR004100">
    <property type="entry name" value="ATPase_F1/V1/A1_a/bsu_N"/>
</dbReference>
<dbReference type="InterPro" id="IPR036121">
    <property type="entry name" value="ATPase_F1/V1/A1_a/bsu_N_sf"/>
</dbReference>
<dbReference type="InterPro" id="IPR000194">
    <property type="entry name" value="ATPase_F1/V1/A1_a/bsu_nucl-bd"/>
</dbReference>
<dbReference type="InterPro" id="IPR027417">
    <property type="entry name" value="P-loop_NTPase"/>
</dbReference>
<dbReference type="NCBIfam" id="TIGR00962">
    <property type="entry name" value="atpA"/>
    <property type="match status" value="1"/>
</dbReference>
<dbReference type="NCBIfam" id="NF009884">
    <property type="entry name" value="PRK13343.1"/>
    <property type="match status" value="1"/>
</dbReference>
<dbReference type="PANTHER" id="PTHR48082">
    <property type="entry name" value="ATP SYNTHASE SUBUNIT ALPHA, MITOCHONDRIAL"/>
    <property type="match status" value="1"/>
</dbReference>
<dbReference type="PANTHER" id="PTHR48082:SF2">
    <property type="entry name" value="ATP SYNTHASE SUBUNIT ALPHA, MITOCHONDRIAL"/>
    <property type="match status" value="1"/>
</dbReference>
<dbReference type="Pfam" id="PF00006">
    <property type="entry name" value="ATP-synt_ab"/>
    <property type="match status" value="1"/>
</dbReference>
<dbReference type="Pfam" id="PF00306">
    <property type="entry name" value="ATP-synt_ab_C"/>
    <property type="match status" value="1"/>
</dbReference>
<dbReference type="Pfam" id="PF02874">
    <property type="entry name" value="ATP-synt_ab_N"/>
    <property type="match status" value="1"/>
</dbReference>
<dbReference type="PIRSF" id="PIRSF039088">
    <property type="entry name" value="F_ATPase_subunit_alpha"/>
    <property type="match status" value="1"/>
</dbReference>
<dbReference type="SUPFAM" id="SSF47917">
    <property type="entry name" value="C-terminal domain of alpha and beta subunits of F1 ATP synthase"/>
    <property type="match status" value="1"/>
</dbReference>
<dbReference type="SUPFAM" id="SSF50615">
    <property type="entry name" value="N-terminal domain of alpha and beta subunits of F1 ATP synthase"/>
    <property type="match status" value="1"/>
</dbReference>
<dbReference type="SUPFAM" id="SSF52540">
    <property type="entry name" value="P-loop containing nucleoside triphosphate hydrolases"/>
    <property type="match status" value="1"/>
</dbReference>
<dbReference type="PROSITE" id="PS00152">
    <property type="entry name" value="ATPASE_ALPHA_BETA"/>
    <property type="match status" value="1"/>
</dbReference>
<feature type="chain" id="PRO_0000238250" description="ATP synthase subunit alpha">
    <location>
        <begin position="1"/>
        <end position="513"/>
    </location>
</feature>
<feature type="binding site" evidence="1">
    <location>
        <begin position="169"/>
        <end position="176"/>
    </location>
    <ligand>
        <name>ATP</name>
        <dbReference type="ChEBI" id="CHEBI:30616"/>
    </ligand>
</feature>
<feature type="site" description="Required for activity" evidence="1">
    <location>
        <position position="373"/>
    </location>
</feature>
<proteinExistence type="inferred from homology"/>
<protein>
    <recommendedName>
        <fullName evidence="1">ATP synthase subunit alpha</fullName>
        <ecNumber evidence="1">7.1.2.2</ecNumber>
    </recommendedName>
    <alternativeName>
        <fullName evidence="1">ATP synthase F1 sector subunit alpha</fullName>
    </alternativeName>
    <alternativeName>
        <fullName evidence="1">F-ATPase subunit alpha</fullName>
    </alternativeName>
</protein>
<reference key="1">
    <citation type="journal article" date="2005" name="Nat. Genet.">
        <title>The complete genome sequence of Francisella tularensis, the causative agent of tularemia.</title>
        <authorList>
            <person name="Larsson P."/>
            <person name="Oyston P.C.F."/>
            <person name="Chain P."/>
            <person name="Chu M.C."/>
            <person name="Duffield M."/>
            <person name="Fuxelius H.-H."/>
            <person name="Garcia E."/>
            <person name="Haelltorp G."/>
            <person name="Johansson D."/>
            <person name="Isherwood K.E."/>
            <person name="Karp P.D."/>
            <person name="Larsson E."/>
            <person name="Liu Y."/>
            <person name="Michell S."/>
            <person name="Prior J."/>
            <person name="Prior R."/>
            <person name="Malfatti S."/>
            <person name="Sjoestedt A."/>
            <person name="Svensson K."/>
            <person name="Thompson N."/>
            <person name="Vergez L."/>
            <person name="Wagg J.K."/>
            <person name="Wren B.W."/>
            <person name="Lindler L.E."/>
            <person name="Andersson S.G.E."/>
            <person name="Forsman M."/>
            <person name="Titball R.W."/>
        </authorList>
    </citation>
    <scope>NUCLEOTIDE SEQUENCE [LARGE SCALE GENOMIC DNA]</scope>
    <source>
        <strain>SCHU S4 / Schu 4</strain>
    </source>
</reference>
<sequence>MQLSPSEISGLIKQRIEKFDNSVELKSEGTIVSVADGIVTIYGLNDVAAGEMIKLPGDVYGLALNLNTDSVGAVVLGDYEHIKEGDKAYCTGRILEVPVGEALLGRVVDALGNPIDGKGEVATDLTSPIEKIAPGVIWRKSVDQALQTGIKSIDSMVPIGRGQRELIIGDRQIGKTAIAVDTIINQKGTGVKCIYVAIGQKASTIANIVRQLEEHGAMEHAIIVAATASDSAALQYIAPYAGCSMGEYFRDRGQDALIVYDDLTKQAWAYRQISLLLRRPPGREAYPGDVFYLHSRLLERAARVNEEYVEKFTNGEVKGKTGSLTALPIIETQAGDISAFVPTNVISITDGQIFLETDLFNSGLRPAINPGNSVSRVGGAAQTKIIKKLGGGIRLALAQYRELEAFSQFASDLDEATRAQLNRGQRVTELLKQKQFSTLSVALMALSLYAADNGYLDNLEVSEVIPFESALHALAETKYSDVIAEINETGKYDADIADKLKIIVEDCKANQAW</sequence>
<organism>
    <name type="scientific">Francisella tularensis subsp. tularensis (strain SCHU S4 / Schu 4)</name>
    <dbReference type="NCBI Taxonomy" id="177416"/>
    <lineage>
        <taxon>Bacteria</taxon>
        <taxon>Pseudomonadati</taxon>
        <taxon>Pseudomonadota</taxon>
        <taxon>Gammaproteobacteria</taxon>
        <taxon>Thiotrichales</taxon>
        <taxon>Francisellaceae</taxon>
        <taxon>Francisella</taxon>
    </lineage>
</organism>
<accession>Q5NIK5</accession>
<evidence type="ECO:0000255" key="1">
    <source>
        <dbReference type="HAMAP-Rule" id="MF_01346"/>
    </source>
</evidence>
<gene>
    <name evidence="1" type="primary">atpA</name>
    <name type="ordered locus">FTT_0062</name>
</gene>
<name>ATPA_FRATT</name>
<keyword id="KW-0066">ATP synthesis</keyword>
<keyword id="KW-0067">ATP-binding</keyword>
<keyword id="KW-0997">Cell inner membrane</keyword>
<keyword id="KW-1003">Cell membrane</keyword>
<keyword id="KW-0139">CF(1)</keyword>
<keyword id="KW-0375">Hydrogen ion transport</keyword>
<keyword id="KW-0406">Ion transport</keyword>
<keyword id="KW-0472">Membrane</keyword>
<keyword id="KW-0547">Nucleotide-binding</keyword>
<keyword id="KW-1185">Reference proteome</keyword>
<keyword id="KW-1278">Translocase</keyword>
<keyword id="KW-0813">Transport</keyword>
<comment type="function">
    <text evidence="1">Produces ATP from ADP in the presence of a proton gradient across the membrane. The alpha chain is a regulatory subunit.</text>
</comment>
<comment type="catalytic activity">
    <reaction evidence="1">
        <text>ATP + H2O + 4 H(+)(in) = ADP + phosphate + 5 H(+)(out)</text>
        <dbReference type="Rhea" id="RHEA:57720"/>
        <dbReference type="ChEBI" id="CHEBI:15377"/>
        <dbReference type="ChEBI" id="CHEBI:15378"/>
        <dbReference type="ChEBI" id="CHEBI:30616"/>
        <dbReference type="ChEBI" id="CHEBI:43474"/>
        <dbReference type="ChEBI" id="CHEBI:456216"/>
        <dbReference type="EC" id="7.1.2.2"/>
    </reaction>
</comment>
<comment type="subunit">
    <text evidence="1">F-type ATPases have 2 components, CF(1) - the catalytic core - and CF(0) - the membrane proton channel. CF(1) has five subunits: alpha(3), beta(3), gamma(1), delta(1), epsilon(1). CF(0) has three main subunits: a(1), b(2) and c(9-12). The alpha and beta chains form an alternating ring which encloses part of the gamma chain. CF(1) is attached to CF(0) by a central stalk formed by the gamma and epsilon chains, while a peripheral stalk is formed by the delta and b chains.</text>
</comment>
<comment type="subcellular location">
    <subcellularLocation>
        <location evidence="1">Cell inner membrane</location>
        <topology evidence="1">Peripheral membrane protein</topology>
    </subcellularLocation>
</comment>
<comment type="similarity">
    <text evidence="1">Belongs to the ATPase alpha/beta chains family.</text>
</comment>